<name>OTC_METTH</name>
<dbReference type="EC" id="2.1.3.3"/>
<dbReference type="EMBL" id="AE000666">
    <property type="protein sequence ID" value="AAB85921.1"/>
    <property type="molecule type" value="Genomic_DNA"/>
</dbReference>
<dbReference type="PIR" id="E69059">
    <property type="entry name" value="E69059"/>
</dbReference>
<dbReference type="RefSeq" id="WP_010877056.1">
    <property type="nucleotide sequence ID" value="NC_000916.1"/>
</dbReference>
<dbReference type="SMR" id="O27495"/>
<dbReference type="FunCoup" id="O27495">
    <property type="interactions" value="186"/>
</dbReference>
<dbReference type="STRING" id="187420.MTH_1446"/>
<dbReference type="PaxDb" id="187420-MTH_1446"/>
<dbReference type="EnsemblBacteria" id="AAB85921">
    <property type="protein sequence ID" value="AAB85921"/>
    <property type="gene ID" value="MTH_1446"/>
</dbReference>
<dbReference type="GeneID" id="82297880"/>
<dbReference type="KEGG" id="mth:MTH_1446"/>
<dbReference type="PATRIC" id="fig|187420.15.peg.1408"/>
<dbReference type="HOGENOM" id="CLU_043846_3_2_2"/>
<dbReference type="InParanoid" id="O27495"/>
<dbReference type="UniPathway" id="UPA00068">
    <property type="reaction ID" value="UER00112"/>
</dbReference>
<dbReference type="Proteomes" id="UP000005223">
    <property type="component" value="Chromosome"/>
</dbReference>
<dbReference type="GO" id="GO:0005737">
    <property type="term" value="C:cytoplasm"/>
    <property type="evidence" value="ECO:0007669"/>
    <property type="project" value="UniProtKB-SubCell"/>
</dbReference>
<dbReference type="GO" id="GO:0016597">
    <property type="term" value="F:amino acid binding"/>
    <property type="evidence" value="ECO:0007669"/>
    <property type="project" value="InterPro"/>
</dbReference>
<dbReference type="GO" id="GO:0004585">
    <property type="term" value="F:ornithine carbamoyltransferase activity"/>
    <property type="evidence" value="ECO:0007669"/>
    <property type="project" value="UniProtKB-UniRule"/>
</dbReference>
<dbReference type="GO" id="GO:0042450">
    <property type="term" value="P:arginine biosynthetic process via ornithine"/>
    <property type="evidence" value="ECO:0007669"/>
    <property type="project" value="TreeGrafter"/>
</dbReference>
<dbReference type="GO" id="GO:0019240">
    <property type="term" value="P:citrulline biosynthetic process"/>
    <property type="evidence" value="ECO:0007669"/>
    <property type="project" value="TreeGrafter"/>
</dbReference>
<dbReference type="GO" id="GO:0006526">
    <property type="term" value="P:L-arginine biosynthetic process"/>
    <property type="evidence" value="ECO:0007669"/>
    <property type="project" value="UniProtKB-UniRule"/>
</dbReference>
<dbReference type="FunFam" id="3.40.50.1370:FF:000008">
    <property type="entry name" value="Ornithine carbamoyltransferase"/>
    <property type="match status" value="1"/>
</dbReference>
<dbReference type="Gene3D" id="3.40.50.1370">
    <property type="entry name" value="Aspartate/ornithine carbamoyltransferase"/>
    <property type="match status" value="2"/>
</dbReference>
<dbReference type="HAMAP" id="MF_01109">
    <property type="entry name" value="OTCase"/>
    <property type="match status" value="1"/>
</dbReference>
<dbReference type="InterPro" id="IPR006132">
    <property type="entry name" value="Asp/Orn_carbamoyltranf_P-bd"/>
</dbReference>
<dbReference type="InterPro" id="IPR006130">
    <property type="entry name" value="Asp/Orn_carbamoylTrfase"/>
</dbReference>
<dbReference type="InterPro" id="IPR036901">
    <property type="entry name" value="Asp/Orn_carbamoylTrfase_sf"/>
</dbReference>
<dbReference type="InterPro" id="IPR006131">
    <property type="entry name" value="Asp_carbamoyltransf_Asp/Orn-bd"/>
</dbReference>
<dbReference type="InterPro" id="IPR002292">
    <property type="entry name" value="Orn/put_carbamltrans"/>
</dbReference>
<dbReference type="InterPro" id="IPR024904">
    <property type="entry name" value="OTCase_ArgI"/>
</dbReference>
<dbReference type="NCBIfam" id="TIGR00658">
    <property type="entry name" value="orni_carb_tr"/>
    <property type="match status" value="1"/>
</dbReference>
<dbReference type="NCBIfam" id="NF001986">
    <property type="entry name" value="PRK00779.1"/>
    <property type="match status" value="1"/>
</dbReference>
<dbReference type="PANTHER" id="PTHR45753">
    <property type="entry name" value="ORNITHINE CARBAMOYLTRANSFERASE, MITOCHONDRIAL"/>
    <property type="match status" value="1"/>
</dbReference>
<dbReference type="PANTHER" id="PTHR45753:SF3">
    <property type="entry name" value="ORNITHINE TRANSCARBAMYLASE, MITOCHONDRIAL"/>
    <property type="match status" value="1"/>
</dbReference>
<dbReference type="Pfam" id="PF00185">
    <property type="entry name" value="OTCace"/>
    <property type="match status" value="1"/>
</dbReference>
<dbReference type="Pfam" id="PF02729">
    <property type="entry name" value="OTCace_N"/>
    <property type="match status" value="1"/>
</dbReference>
<dbReference type="PRINTS" id="PR00100">
    <property type="entry name" value="AOTCASE"/>
</dbReference>
<dbReference type="PRINTS" id="PR00102">
    <property type="entry name" value="OTCASE"/>
</dbReference>
<dbReference type="SUPFAM" id="SSF53671">
    <property type="entry name" value="Aspartate/ornithine carbamoyltransferase"/>
    <property type="match status" value="1"/>
</dbReference>
<dbReference type="PROSITE" id="PS00097">
    <property type="entry name" value="CARBAMOYLTRANSFERASE"/>
    <property type="match status" value="1"/>
</dbReference>
<evidence type="ECO:0000250" key="1"/>
<evidence type="ECO:0000255" key="2">
    <source>
        <dbReference type="HAMAP-Rule" id="MF_01109"/>
    </source>
</evidence>
<evidence type="ECO:0000305" key="3"/>
<reference key="1">
    <citation type="journal article" date="1997" name="J. Bacteriol.">
        <title>Complete genome sequence of Methanobacterium thermoautotrophicum deltaH: functional analysis and comparative genomics.</title>
        <authorList>
            <person name="Smith D.R."/>
            <person name="Doucette-Stamm L.A."/>
            <person name="Deloughery C."/>
            <person name="Lee H.-M."/>
            <person name="Dubois J."/>
            <person name="Aldredge T."/>
            <person name="Bashirzadeh R."/>
            <person name="Blakely D."/>
            <person name="Cook R."/>
            <person name="Gilbert K."/>
            <person name="Harrison D."/>
            <person name="Hoang L."/>
            <person name="Keagle P."/>
            <person name="Lumm W."/>
            <person name="Pothier B."/>
            <person name="Qiu D."/>
            <person name="Spadafora R."/>
            <person name="Vicare R."/>
            <person name="Wang Y."/>
            <person name="Wierzbowski J."/>
            <person name="Gibson R."/>
            <person name="Jiwani N."/>
            <person name="Caruso A."/>
            <person name="Bush D."/>
            <person name="Safer H."/>
            <person name="Patwell D."/>
            <person name="Prabhakar S."/>
            <person name="McDougall S."/>
            <person name="Shimer G."/>
            <person name="Goyal A."/>
            <person name="Pietrovski S."/>
            <person name="Church G.M."/>
            <person name="Daniels C.J."/>
            <person name="Mao J.-I."/>
            <person name="Rice P."/>
            <person name="Noelling J."/>
            <person name="Reeve J.N."/>
        </authorList>
    </citation>
    <scope>NUCLEOTIDE SEQUENCE [LARGE SCALE GENOMIC DNA]</scope>
    <source>
        <strain>ATCC 29096 / DSM 1053 / JCM 10044 / NBRC 100330 / Delta H</strain>
    </source>
</reference>
<protein>
    <recommendedName>
        <fullName>Ornithine carbamoyltransferase</fullName>
        <shortName>OTCase</shortName>
        <ecNumber>2.1.3.3</ecNumber>
    </recommendedName>
</protein>
<organism>
    <name type="scientific">Methanothermobacter thermautotrophicus (strain ATCC 29096 / DSM 1053 / JCM 10044 / NBRC 100330 / Delta H)</name>
    <name type="common">Methanobacterium thermoautotrophicum</name>
    <dbReference type="NCBI Taxonomy" id="187420"/>
    <lineage>
        <taxon>Archaea</taxon>
        <taxon>Methanobacteriati</taxon>
        <taxon>Methanobacteriota</taxon>
        <taxon>Methanomada group</taxon>
        <taxon>Methanobacteria</taxon>
        <taxon>Methanobacteriales</taxon>
        <taxon>Methanobacteriaceae</taxon>
        <taxon>Methanothermobacter</taxon>
    </lineage>
</organism>
<keyword id="KW-0028">Amino-acid biosynthesis</keyword>
<keyword id="KW-0055">Arginine biosynthesis</keyword>
<keyword id="KW-0963">Cytoplasm</keyword>
<keyword id="KW-1185">Reference proteome</keyword>
<keyword id="KW-0808">Transferase</keyword>
<sequence>MKHLLSVCDMDNVVDLLDLADDYKEGKIREKILRGKTLAMIFEKSSTRTRVSFEVGAFQMGAQPLYLSASDLQLGRGEPIADTARTLSRYVDGIMIRAISHSDVVELAGEASVPVINGLTDLEHPCQALADMQTIREKLGGFDGRLVFVGDGNNVCHSLLLITATLGMDMDVACPPGYEPDPGIREMAGKIADETGSRIRVIHDPSEAVRGADVVYTDVWVSMGYEDEAEDRLEVFRPYQVNMELMELAAPEAIFMHCLPAVRGQETTAEVIDGPHSVVWDQAENRLHAQKAIMHWLMGDI</sequence>
<accession>O27495</accession>
<feature type="chain" id="PRO_0000113069" description="Ornithine carbamoyltransferase">
    <location>
        <begin position="1"/>
        <end position="301"/>
    </location>
</feature>
<feature type="binding site" evidence="2">
    <location>
        <begin position="46"/>
        <end position="49"/>
    </location>
    <ligand>
        <name>carbamoyl phosphate</name>
        <dbReference type="ChEBI" id="CHEBI:58228"/>
    </ligand>
</feature>
<feature type="binding site" evidence="2">
    <location>
        <position position="73"/>
    </location>
    <ligand>
        <name>carbamoyl phosphate</name>
        <dbReference type="ChEBI" id="CHEBI:58228"/>
    </ligand>
</feature>
<feature type="binding site" evidence="2">
    <location>
        <position position="97"/>
    </location>
    <ligand>
        <name>carbamoyl phosphate</name>
        <dbReference type="ChEBI" id="CHEBI:58228"/>
    </ligand>
</feature>
<feature type="binding site" evidence="2">
    <location>
        <begin position="124"/>
        <end position="127"/>
    </location>
    <ligand>
        <name>carbamoyl phosphate</name>
        <dbReference type="ChEBI" id="CHEBI:58228"/>
    </ligand>
</feature>
<feature type="binding site" evidence="2">
    <location>
        <position position="154"/>
    </location>
    <ligand>
        <name>L-ornithine</name>
        <dbReference type="ChEBI" id="CHEBI:46911"/>
    </ligand>
</feature>
<feature type="binding site" evidence="2">
    <location>
        <position position="218"/>
    </location>
    <ligand>
        <name>L-ornithine</name>
        <dbReference type="ChEBI" id="CHEBI:46911"/>
    </ligand>
</feature>
<feature type="binding site" evidence="2">
    <location>
        <begin position="222"/>
        <end position="223"/>
    </location>
    <ligand>
        <name>L-ornithine</name>
        <dbReference type="ChEBI" id="CHEBI:46911"/>
    </ligand>
</feature>
<feature type="binding site" evidence="2">
    <location>
        <begin position="258"/>
        <end position="259"/>
    </location>
    <ligand>
        <name>carbamoyl phosphate</name>
        <dbReference type="ChEBI" id="CHEBI:58228"/>
    </ligand>
</feature>
<feature type="binding site" evidence="2">
    <location>
        <position position="286"/>
    </location>
    <ligand>
        <name>carbamoyl phosphate</name>
        <dbReference type="ChEBI" id="CHEBI:58228"/>
    </ligand>
</feature>
<comment type="function">
    <text evidence="1">Reversibly catalyzes the transfer of the carbamoyl group from carbamoyl phosphate (CP) to the N(epsilon) atom of ornithine (ORN) to produce L-citrulline.</text>
</comment>
<comment type="catalytic activity">
    <reaction>
        <text>carbamoyl phosphate + L-ornithine = L-citrulline + phosphate + H(+)</text>
        <dbReference type="Rhea" id="RHEA:19513"/>
        <dbReference type="ChEBI" id="CHEBI:15378"/>
        <dbReference type="ChEBI" id="CHEBI:43474"/>
        <dbReference type="ChEBI" id="CHEBI:46911"/>
        <dbReference type="ChEBI" id="CHEBI:57743"/>
        <dbReference type="ChEBI" id="CHEBI:58228"/>
        <dbReference type="EC" id="2.1.3.3"/>
    </reaction>
</comment>
<comment type="pathway">
    <text>Amino-acid biosynthesis; L-arginine biosynthesis; L-arginine from L-ornithine and carbamoyl phosphate: step 1/3.</text>
</comment>
<comment type="subcellular location">
    <subcellularLocation>
        <location evidence="1">Cytoplasm</location>
    </subcellularLocation>
</comment>
<comment type="similarity">
    <text evidence="3">Belongs to the aspartate/ornithine carbamoyltransferase superfamily. OTCase family.</text>
</comment>
<proteinExistence type="inferred from homology"/>
<gene>
    <name type="primary">argF</name>
    <name type="ordered locus">MTH_1446</name>
</gene>